<gene>
    <name type="primary">Pde4d</name>
</gene>
<accession>Q01063</accession>
<accession>B2KF58</accession>
<accession>Q6TRH9</accession>
<accession>Q8C4Q7</accession>
<accession>Q8CG05</accession>
<feature type="chain" id="PRO_0000198815" description="3',5'-cyclic-AMP phosphodiesterase 4D">
    <location>
        <begin position="1"/>
        <end position="747"/>
    </location>
</feature>
<feature type="domain" description="PDEase" evidence="4">
    <location>
        <begin position="325"/>
        <end position="654"/>
    </location>
</feature>
<feature type="region of interest" description="Disordered" evidence="5">
    <location>
        <begin position="1"/>
        <end position="28"/>
    </location>
</feature>
<feature type="region of interest" description="Disordered" evidence="5">
    <location>
        <begin position="282"/>
        <end position="302"/>
    </location>
</feature>
<feature type="region of interest" description="Disordered" evidence="5">
    <location>
        <begin position="649"/>
        <end position="747"/>
    </location>
</feature>
<feature type="compositionally biased region" description="Basic and acidic residues" evidence="5">
    <location>
        <begin position="14"/>
        <end position="24"/>
    </location>
</feature>
<feature type="compositionally biased region" description="Polar residues" evidence="5">
    <location>
        <begin position="701"/>
        <end position="712"/>
    </location>
</feature>
<feature type="compositionally biased region" description="Acidic residues" evidence="5">
    <location>
        <begin position="718"/>
        <end position="734"/>
    </location>
</feature>
<feature type="active site" description="Proton donor" evidence="2">
    <location>
        <position position="401"/>
    </location>
</feature>
<feature type="binding site" evidence="3">
    <location>
        <position position="401"/>
    </location>
    <ligand>
        <name>3',5'-cyclic AMP</name>
        <dbReference type="ChEBI" id="CHEBI:58165"/>
    </ligand>
</feature>
<feature type="binding site" evidence="3">
    <location>
        <position position="401"/>
    </location>
    <ligand>
        <name>AMP</name>
        <dbReference type="ChEBI" id="CHEBI:456215"/>
    </ligand>
</feature>
<feature type="binding site" evidence="3">
    <location>
        <position position="405"/>
    </location>
    <ligand>
        <name>Zn(2+)</name>
        <dbReference type="ChEBI" id="CHEBI:29105"/>
        <label>1</label>
    </ligand>
</feature>
<feature type="binding site" evidence="3">
    <location>
        <position position="441"/>
    </location>
    <ligand>
        <name>Zn(2+)</name>
        <dbReference type="ChEBI" id="CHEBI:29105"/>
        <label>1</label>
    </ligand>
</feature>
<feature type="binding site" evidence="3">
    <location>
        <position position="442"/>
    </location>
    <ligand>
        <name>AMP</name>
        <dbReference type="ChEBI" id="CHEBI:456215"/>
    </ligand>
</feature>
<feature type="binding site" evidence="3">
    <location>
        <position position="442"/>
    </location>
    <ligand>
        <name>Mg(2+)</name>
        <dbReference type="ChEBI" id="CHEBI:18420"/>
    </ligand>
</feature>
<feature type="binding site" evidence="2">
    <location>
        <position position="442"/>
    </location>
    <ligand>
        <name>Mn(2+)</name>
        <dbReference type="ChEBI" id="CHEBI:29035"/>
    </ligand>
</feature>
<feature type="binding site" evidence="3">
    <location>
        <position position="442"/>
    </location>
    <ligand>
        <name>Zn(2+)</name>
        <dbReference type="ChEBI" id="CHEBI:29105"/>
        <label>1</label>
    </ligand>
</feature>
<feature type="binding site" evidence="3">
    <location>
        <position position="442"/>
    </location>
    <ligand>
        <name>Zn(2+)</name>
        <dbReference type="ChEBI" id="CHEBI:29105"/>
        <label>2</label>
    </ligand>
</feature>
<feature type="binding site" evidence="3">
    <location>
        <position position="559"/>
    </location>
    <ligand>
        <name>AMP</name>
        <dbReference type="ChEBI" id="CHEBI:456215"/>
    </ligand>
</feature>
<feature type="binding site" evidence="3">
    <location>
        <position position="559"/>
    </location>
    <ligand>
        <name>Zn(2+)</name>
        <dbReference type="ChEBI" id="CHEBI:29105"/>
        <label>1</label>
    </ligand>
</feature>
<feature type="binding site" evidence="3">
    <location>
        <position position="562"/>
    </location>
    <ligand>
        <name>AMP</name>
        <dbReference type="ChEBI" id="CHEBI:456215"/>
    </ligand>
</feature>
<feature type="binding site" evidence="3">
    <location>
        <position position="610"/>
    </location>
    <ligand>
        <name>3',5'-cyclic AMP</name>
        <dbReference type="ChEBI" id="CHEBI:58165"/>
    </ligand>
</feature>
<feature type="binding site" evidence="3">
    <location>
        <position position="610"/>
    </location>
    <ligand>
        <name>AMP</name>
        <dbReference type="ChEBI" id="CHEBI:456215"/>
    </ligand>
</feature>
<feature type="binding site" evidence="3">
    <location>
        <position position="613"/>
    </location>
    <ligand>
        <name>3',5'-cyclic AMP</name>
        <dbReference type="ChEBI" id="CHEBI:58165"/>
    </ligand>
</feature>
<feature type="binding site" evidence="3">
    <location>
        <position position="613"/>
    </location>
    <ligand>
        <name>AMP</name>
        <dbReference type="ChEBI" id="CHEBI:456215"/>
    </ligand>
</feature>
<feature type="modified residue" description="Phosphoserine" evidence="3">
    <location>
        <position position="238"/>
    </location>
</feature>
<feature type="modified residue" description="Phosphoserine" evidence="3">
    <location>
        <position position="240"/>
    </location>
</feature>
<feature type="modified residue" description="Phosphoserine" evidence="3">
    <location>
        <position position="287"/>
    </location>
</feature>
<feature type="modified residue" description="Phosphoserine" evidence="3">
    <location>
        <position position="314"/>
    </location>
</feature>
<feature type="cross-link" description="Glycyl lysine isopeptide (Lys-Gly) (interchain with G-Cter in SUMO)" evidence="1">
    <location>
        <position position="326"/>
    </location>
</feature>
<feature type="splice variant" id="VSP_012394" description="In isoform 3." evidence="9">
    <location>
        <begin position="1"/>
        <end position="163"/>
    </location>
</feature>
<feature type="splice variant" id="VSP_012395" description="In isoform 9." evidence="10">
    <location>
        <begin position="1"/>
        <end position="69"/>
    </location>
</feature>
<feature type="splice variant" id="VSP_012396" description="In isoform 9." evidence="10">
    <original>RPTSLPLKILPLIAVTSADSSG</original>
    <variation>MSIIMKPRSRSTSSLRTTEAVC</variation>
    <location>
        <begin position="70"/>
        <end position="91"/>
    </location>
</feature>
<feature type="splice variant" id="VSP_012397" description="In isoform 3." evidence="9">
    <original>PFAQVLASLRTVRNNFAALTNLQDRAPSKRSPMCNQPSINKATIT</original>
    <variation>MKEQPSCAGTGHPSMAGYGRMAPFELAGGPVKRLRTESSFPCLFA</variation>
    <location>
        <begin position="164"/>
        <end position="208"/>
    </location>
</feature>
<feature type="sequence conflict" description="In Ref. 5; AAA37368." evidence="11" ref="5">
    <original>NI</original>
    <variation>SR</variation>
    <location>
        <begin position="403"/>
        <end position="404"/>
    </location>
</feature>
<comment type="function">
    <text evidence="1">Hydrolyzes the second messenger cAMP, which is a key regulator of many important physiological processes.</text>
</comment>
<comment type="catalytic activity">
    <reaction evidence="3">
        <text>3',5'-cyclic AMP + H2O = AMP + H(+)</text>
        <dbReference type="Rhea" id="RHEA:25277"/>
        <dbReference type="ChEBI" id="CHEBI:15377"/>
        <dbReference type="ChEBI" id="CHEBI:15378"/>
        <dbReference type="ChEBI" id="CHEBI:58165"/>
        <dbReference type="ChEBI" id="CHEBI:456215"/>
        <dbReference type="EC" id="3.1.4.53"/>
    </reaction>
    <physiologicalReaction direction="left-to-right" evidence="3">
        <dbReference type="Rhea" id="RHEA:25278"/>
    </physiologicalReaction>
</comment>
<comment type="cofactor">
    <cofactor evidence="3">
        <name>Zn(2+)</name>
        <dbReference type="ChEBI" id="CHEBI:29105"/>
    </cofactor>
    <text evidence="3">Binds 2 divalent metal cations per subunit. Site 1 may preferentially bind zinc ions.</text>
</comment>
<comment type="cofactor">
    <cofactor evidence="3">
        <name>Mg(2+)</name>
        <dbReference type="ChEBI" id="CHEBI:18420"/>
    </cofactor>
    <cofactor evidence="2">
        <name>Mn(2+)</name>
        <dbReference type="ChEBI" id="CHEBI:29035"/>
    </cofactor>
    <text evidence="3">Binds 2 divalent metal cations per subunit. Site 2 has a preference for magnesium and/or manganese ions.</text>
</comment>
<comment type="activity regulation">
    <text evidence="1">Inhibited by rolipram. Activated by phosphatidic acid (By similarity).</text>
</comment>
<comment type="pathway">
    <text>Purine metabolism; 3',5'-cyclic AMP degradation; AMP from 3',5'-cyclic AMP: step 1/1.</text>
</comment>
<comment type="subunit">
    <text evidence="1 7 8">Homodimer for the long isoforms. Isoforms with truncated N-termini are monomeric. Binds ARRB2. Interacts with PDE4DIP (By similarity). Identified in a complex composed of RYR1, PDE4D, PKA, FKBP1A and protein phosphatase 1 (PP1). Interacts (via N-terminal region) with SHANK2 (via proline-rich region); the interaction is increased in a PKA-dependent manner.</text>
</comment>
<comment type="interaction">
    <interactant intactId="EBI-7764239">
        <id>Q01063</id>
    </interactant>
    <interactant intactId="EBI-7764182">
        <id>P34971</id>
        <label>Adrb1</label>
    </interactant>
    <organismsDiffer>false</organismsDiffer>
    <experiments>3</experiments>
</comment>
<comment type="subcellular location">
    <subcellularLocation>
        <location>Cytoplasm</location>
    </subcellularLocation>
    <subcellularLocation>
        <location>Membrane</location>
    </subcellularLocation>
    <subcellularLocation>
        <location>Cytoplasm</location>
        <location>Cytoskeleton</location>
    </subcellularLocation>
    <subcellularLocation>
        <location>Cytoplasm</location>
        <location>Cytoskeleton</location>
        <location>Microtubule organizing center</location>
        <location>Centrosome</location>
    </subcellularLocation>
    <subcellularLocation>
        <location evidence="1">Apical cell membrane</location>
    </subcellularLocation>
    <text evidence="1">Colocalized with SHANK2 to the apical membrane of colonic crypt cells (By similarity). Found in the soluble fraction, associated with membranes, and associated with the cytoskeleton and the centrosome.</text>
</comment>
<comment type="alternative products">
    <event type="alternative splicing"/>
    <isoform>
        <id>Q01063-1</id>
        <name>7</name>
        <name>PDE4D7</name>
        <sequence type="displayed"/>
    </isoform>
    <isoform>
        <id>Q01063-2</id>
        <name>9</name>
        <name>PDE4D9</name>
        <sequence type="described" ref="VSP_012395 VSP_012396"/>
    </isoform>
    <isoform>
        <id>Q01063-3</id>
        <name>3</name>
        <sequence type="described" ref="VSP_012394 VSP_012397"/>
    </isoform>
</comment>
<comment type="tissue specificity">
    <text evidence="6 7">Expressed in brain (at protein level). Isoform 7 is detected in heart, brain, lung, kidney and testis.</text>
</comment>
<comment type="induction">
    <text evidence="1">Up-regulated by cAMP and follicle-stimulating hormone.</text>
</comment>
<comment type="PTM">
    <text evidence="1">Sumoylation of long isoforms by PIAS4 augments their activation by PKA phosphorylation and represses their inhibition by ERK phosphorylation.</text>
</comment>
<comment type="similarity">
    <text evidence="11">Belongs to the cyclic nucleotide phosphodiesterase family. PDE4 subfamily.</text>
</comment>
<name>PDE4D_MOUSE</name>
<sequence>MERDTCDVLSRSKSASEETLHSCNEEEDPFRGMEPYLVRRLSSRSIQLPPLAFRQLEQADLRSESENIPRPTSLPLKILPLIAVTSADSSGFDVDNGTSAGRSPLDPMTSPGSGLILQANFVHSQRRESFLYRSDSDYDLSPKSMSRNSSIASDIHGDDLIVTPFAQVLASLRTVRNNFAALTNLQDRAPSKRSPMCNQPSINKATITEEAYQKLASETLEELDWCLDQLETLQTRHSVSEMASNKFKRMLNRELTHLSEMSRSGNQVSEYISNTFLDKQHEVEIPSPTQKEKEKKKRPMSQISGVKKLMHSSSLTNSCIPRFGVKTEQEDVLAKELEDVNKWGLHVFRIAELSGNRPLTVIMHTIFQERDLLKTFKIPVDTLITYLMTLEDHYHADVAYHNNIHAADVVQSTHVLLSTPALEAVFTDLEILAAIFASAIHDVDHPGVSNQFLINTNSELALMYNDSSVLENHHLAVGFKLLQEENCDIFQNLTKKQRQSLRKMVIDIVLATDMSKHMNLLADLKTMVETKKVTSSGVLLLDNYSDRIQVLQNMVHCADLSNPTKPLQLYRQWTDRIMEEFFRQGDRERERGMEISPMCDKHNASVEKSQVGFIDYIVHPLWETWADLVHPDAQDILDTLEDNREWYQSTIPQSPSPAPDDQEEGRQGQTEKFQFELTLEEDCESDTEKDSGSQVEEDTSCSDSKTLCTQDSESTEIPLDEQVEEEAVAEEESQPETCVPDDCCPDT</sequence>
<dbReference type="EC" id="3.1.4.53"/>
<dbReference type="EMBL" id="AF536978">
    <property type="protein sequence ID" value="AAN10120.1"/>
    <property type="molecule type" value="mRNA"/>
</dbReference>
<dbReference type="EMBL" id="AY388962">
    <property type="protein sequence ID" value="AAQ90406.1"/>
    <property type="molecule type" value="mRNA"/>
</dbReference>
<dbReference type="EMBL" id="AK081466">
    <property type="protein sequence ID" value="BAC38226.1"/>
    <property type="molecule type" value="mRNA"/>
</dbReference>
<dbReference type="EMBL" id="CT025605">
    <property type="protein sequence ID" value="CAQ51656.1"/>
    <property type="molecule type" value="Genomic_DNA"/>
</dbReference>
<dbReference type="EMBL" id="AC161585">
    <property type="protein sequence ID" value="CAQ51656.1"/>
    <property type="status" value="JOINED"/>
    <property type="molecule type" value="Genomic_DNA"/>
</dbReference>
<dbReference type="EMBL" id="AC163650">
    <property type="protein sequence ID" value="CAQ51656.1"/>
    <property type="status" value="JOINED"/>
    <property type="molecule type" value="Genomic_DNA"/>
</dbReference>
<dbReference type="EMBL" id="M94541">
    <property type="protein sequence ID" value="AAA37368.1"/>
    <property type="status" value="ALT_TERM"/>
    <property type="molecule type" value="mRNA"/>
</dbReference>
<dbReference type="CCDS" id="CCDS49359.1">
    <molecule id="Q01063-1"/>
</dbReference>
<dbReference type="RefSeq" id="NP_001389815.1">
    <molecule id="Q01063-2"/>
    <property type="nucleotide sequence ID" value="NM_001402886.1"/>
</dbReference>
<dbReference type="RefSeq" id="NP_035186.1">
    <molecule id="Q01063-1"/>
    <property type="nucleotide sequence ID" value="NM_011056.3"/>
</dbReference>
<dbReference type="RefSeq" id="XP_006517710.1">
    <property type="nucleotide sequence ID" value="XM_006517647.2"/>
</dbReference>
<dbReference type="SMR" id="Q01063"/>
<dbReference type="BioGRID" id="232023">
    <property type="interactions" value="4"/>
</dbReference>
<dbReference type="CORUM" id="Q01063"/>
<dbReference type="DIP" id="DIP-29706N"/>
<dbReference type="FunCoup" id="Q01063">
    <property type="interactions" value="813"/>
</dbReference>
<dbReference type="IntAct" id="Q01063">
    <property type="interactions" value="6"/>
</dbReference>
<dbReference type="MINT" id="Q01063"/>
<dbReference type="STRING" id="10090.ENSMUSP00000113488"/>
<dbReference type="BindingDB" id="Q01063"/>
<dbReference type="ChEMBL" id="CHEMBL3846"/>
<dbReference type="GlyGen" id="Q01063">
    <property type="glycosylation" value="1 site, 1 O-linked glycan (1 site)"/>
</dbReference>
<dbReference type="iPTMnet" id="Q01063"/>
<dbReference type="PhosphoSitePlus" id="Q01063"/>
<dbReference type="jPOST" id="Q01063"/>
<dbReference type="PaxDb" id="10090-ENSMUSP00000112991"/>
<dbReference type="ProteomicsDB" id="287811">
    <molecule id="Q01063-1"/>
</dbReference>
<dbReference type="ProteomicsDB" id="287812">
    <molecule id="Q01063-2"/>
</dbReference>
<dbReference type="ProteomicsDB" id="287813">
    <molecule id="Q01063-3"/>
</dbReference>
<dbReference type="Pumba" id="Q01063"/>
<dbReference type="Antibodypedia" id="23607">
    <property type="antibodies" value="546 antibodies from 38 providers"/>
</dbReference>
<dbReference type="DNASU" id="238871"/>
<dbReference type="Ensembl" id="ENSMUST00000074103.12">
    <molecule id="Q01063-2"/>
    <property type="protein sequence ID" value="ENSMUSP00000073742.6"/>
    <property type="gene ID" value="ENSMUSG00000021699.18"/>
</dbReference>
<dbReference type="Ensembl" id="ENSMUST00000120664.8">
    <molecule id="Q01063-3"/>
    <property type="protein sequence ID" value="ENSMUSP00000113024.2"/>
    <property type="gene ID" value="ENSMUSG00000021699.18"/>
</dbReference>
<dbReference type="Ensembl" id="ENSMUST00000122041.8">
    <molecule id="Q01063-1"/>
    <property type="protein sequence ID" value="ENSMUSP00000113488.2"/>
    <property type="gene ID" value="ENSMUSG00000021699.18"/>
</dbReference>
<dbReference type="Ensembl" id="ENSMUST00000177907.8">
    <molecule id="Q01063-1"/>
    <property type="protein sequence ID" value="ENSMUSP00000136485.2"/>
    <property type="gene ID" value="ENSMUSG00000021699.18"/>
</dbReference>
<dbReference type="GeneID" id="238871"/>
<dbReference type="KEGG" id="mmu:238871"/>
<dbReference type="UCSC" id="uc007rvg.2">
    <molecule id="Q01063-1"/>
    <property type="organism name" value="mouse"/>
</dbReference>
<dbReference type="UCSC" id="uc007rvj.2">
    <molecule id="Q01063-2"/>
    <property type="organism name" value="mouse"/>
</dbReference>
<dbReference type="AGR" id="MGI:99555"/>
<dbReference type="CTD" id="5144"/>
<dbReference type="MGI" id="MGI:99555">
    <property type="gene designation" value="Pde4d"/>
</dbReference>
<dbReference type="VEuPathDB" id="HostDB:ENSMUSG00000021699"/>
<dbReference type="eggNOG" id="KOG3689">
    <property type="taxonomic scope" value="Eukaryota"/>
</dbReference>
<dbReference type="GeneTree" id="ENSGT00940000155674"/>
<dbReference type="HOGENOM" id="CLU_005940_5_2_1"/>
<dbReference type="InParanoid" id="Q01063"/>
<dbReference type="OMA" id="KEQPPCA"/>
<dbReference type="OrthoDB" id="31248at9989"/>
<dbReference type="PhylomeDB" id="Q01063"/>
<dbReference type="BRENDA" id="3.1.4.53">
    <property type="organism ID" value="3474"/>
</dbReference>
<dbReference type="Reactome" id="R-MMU-180024">
    <property type="pathway name" value="DARPP-32 events"/>
</dbReference>
<dbReference type="Reactome" id="R-MMU-418555">
    <property type="pathway name" value="G alpha (s) signalling events"/>
</dbReference>
<dbReference type="Reactome" id="R-MMU-9860927">
    <property type="pathway name" value="Turbulent (oscillatory, disturbed) flow shear stress activates signaling by PIEZO1 and integrins in endothelial cells"/>
</dbReference>
<dbReference type="UniPathway" id="UPA00762">
    <property type="reaction ID" value="UER00747"/>
</dbReference>
<dbReference type="BioGRID-ORCS" id="238871">
    <property type="hits" value="2 hits in 79 CRISPR screens"/>
</dbReference>
<dbReference type="ChiTaRS" id="Pde4d">
    <property type="organism name" value="mouse"/>
</dbReference>
<dbReference type="PRO" id="PR:Q01063"/>
<dbReference type="Proteomes" id="UP000000589">
    <property type="component" value="Chromosome 13"/>
</dbReference>
<dbReference type="RNAct" id="Q01063">
    <property type="molecule type" value="protein"/>
</dbReference>
<dbReference type="Bgee" id="ENSMUSG00000021699">
    <property type="expression patterns" value="Expressed in hindlimb stylopod muscle and 112 other cell types or tissues"/>
</dbReference>
<dbReference type="ExpressionAtlas" id="Q01063">
    <property type="expression patterns" value="baseline and differential"/>
</dbReference>
<dbReference type="GO" id="GO:0016324">
    <property type="term" value="C:apical plasma membrane"/>
    <property type="evidence" value="ECO:0007669"/>
    <property type="project" value="UniProtKB-SubCell"/>
</dbReference>
<dbReference type="GO" id="GO:0034704">
    <property type="term" value="C:calcium channel complex"/>
    <property type="evidence" value="ECO:0000314"/>
    <property type="project" value="BHF-UCL"/>
</dbReference>
<dbReference type="GO" id="GO:0005813">
    <property type="term" value="C:centrosome"/>
    <property type="evidence" value="ECO:0000314"/>
    <property type="project" value="MGI"/>
</dbReference>
<dbReference type="GO" id="GO:0005737">
    <property type="term" value="C:cytoplasm"/>
    <property type="evidence" value="ECO:0007669"/>
    <property type="project" value="UniProtKB-SubCell"/>
</dbReference>
<dbReference type="GO" id="GO:0034705">
    <property type="term" value="C:potassium channel complex"/>
    <property type="evidence" value="ECO:0000314"/>
    <property type="project" value="MGI"/>
</dbReference>
<dbReference type="GO" id="GO:0005891">
    <property type="term" value="C:voltage-gated calcium channel complex"/>
    <property type="evidence" value="ECO:0000314"/>
    <property type="project" value="BHF-UCL"/>
</dbReference>
<dbReference type="GO" id="GO:0004115">
    <property type="term" value="F:3',5'-cyclic-AMP phosphodiesterase activity"/>
    <property type="evidence" value="ECO:0000314"/>
    <property type="project" value="BHF-UCL"/>
</dbReference>
<dbReference type="GO" id="GO:0004114">
    <property type="term" value="F:3',5'-cyclic-nucleotide phosphodiesterase activity"/>
    <property type="evidence" value="ECO:0000314"/>
    <property type="project" value="MGI"/>
</dbReference>
<dbReference type="GO" id="GO:0051117">
    <property type="term" value="F:ATPase binding"/>
    <property type="evidence" value="ECO:0000353"/>
    <property type="project" value="BHF-UCL"/>
</dbReference>
<dbReference type="GO" id="GO:0005246">
    <property type="term" value="F:calcium channel regulator activity"/>
    <property type="evidence" value="ECO:0000315"/>
    <property type="project" value="BHF-UCL"/>
</dbReference>
<dbReference type="GO" id="GO:0046872">
    <property type="term" value="F:metal ion binding"/>
    <property type="evidence" value="ECO:0007669"/>
    <property type="project" value="UniProtKB-KW"/>
</dbReference>
<dbReference type="GO" id="GO:0044325">
    <property type="term" value="F:transmembrane transporter binding"/>
    <property type="evidence" value="ECO:0000353"/>
    <property type="project" value="BHF-UCL"/>
</dbReference>
<dbReference type="GO" id="GO:0006198">
    <property type="term" value="P:cAMP catabolic process"/>
    <property type="evidence" value="ECO:0007669"/>
    <property type="project" value="UniProtKB-UniPathway"/>
</dbReference>
<dbReference type="GO" id="GO:0141156">
    <property type="term" value="P:cAMP/PKA signal transduction"/>
    <property type="evidence" value="ECO:0000314"/>
    <property type="project" value="MGI"/>
</dbReference>
<dbReference type="GO" id="GO:0071320">
    <property type="term" value="P:cellular response to cAMP"/>
    <property type="evidence" value="ECO:0000314"/>
    <property type="project" value="MGI"/>
</dbReference>
<dbReference type="GO" id="GO:0071872">
    <property type="term" value="P:cellular response to epinephrine stimulus"/>
    <property type="evidence" value="ECO:0000315"/>
    <property type="project" value="BHF-UCL"/>
</dbReference>
<dbReference type="GO" id="GO:0071372">
    <property type="term" value="P:cellular response to follicle-stimulating hormone stimulus"/>
    <property type="evidence" value="ECO:0000315"/>
    <property type="project" value="MGI"/>
</dbReference>
<dbReference type="GO" id="GO:0071222">
    <property type="term" value="P:cellular response to lipopolysaccharide"/>
    <property type="evidence" value="ECO:0000315"/>
    <property type="project" value="MGI"/>
</dbReference>
<dbReference type="GO" id="GO:0061028">
    <property type="term" value="P:establishment of endothelial barrier"/>
    <property type="evidence" value="ECO:0000250"/>
    <property type="project" value="UniProtKB"/>
</dbReference>
<dbReference type="GO" id="GO:0035264">
    <property type="term" value="P:multicellular organism growth"/>
    <property type="evidence" value="ECO:0000315"/>
    <property type="project" value="MGI"/>
</dbReference>
<dbReference type="GO" id="GO:0045822">
    <property type="term" value="P:negative regulation of heart contraction"/>
    <property type="evidence" value="ECO:0000315"/>
    <property type="project" value="BHF-UCL"/>
</dbReference>
<dbReference type="GO" id="GO:1901898">
    <property type="term" value="P:negative regulation of relaxation of cardiac muscle"/>
    <property type="evidence" value="ECO:0000315"/>
    <property type="project" value="BHF-UCL"/>
</dbReference>
<dbReference type="GO" id="GO:0030593">
    <property type="term" value="P:neutrophil chemotaxis"/>
    <property type="evidence" value="ECO:0000315"/>
    <property type="project" value="MGI"/>
</dbReference>
<dbReference type="GO" id="GO:1990266">
    <property type="term" value="P:neutrophil migration"/>
    <property type="evidence" value="ECO:0000315"/>
    <property type="project" value="MGI"/>
</dbReference>
<dbReference type="GO" id="GO:0001542">
    <property type="term" value="P:ovulation from ovarian follicle"/>
    <property type="evidence" value="ECO:0000315"/>
    <property type="project" value="MGI"/>
</dbReference>
<dbReference type="GO" id="GO:1902514">
    <property type="term" value="P:regulation of calcium ion transmembrane transport via high voltage-gated calcium channel"/>
    <property type="evidence" value="ECO:0000315"/>
    <property type="project" value="BHF-UCL"/>
</dbReference>
<dbReference type="GO" id="GO:0086004">
    <property type="term" value="P:regulation of cardiac muscle cell contraction"/>
    <property type="evidence" value="ECO:0000315"/>
    <property type="project" value="BHF-UCL"/>
</dbReference>
<dbReference type="GO" id="GO:1901844">
    <property type="term" value="P:regulation of cell communication by electrical coupling involved in cardiac conduction"/>
    <property type="evidence" value="ECO:0000315"/>
    <property type="project" value="BHF-UCL"/>
</dbReference>
<dbReference type="GO" id="GO:0002027">
    <property type="term" value="P:regulation of heart rate"/>
    <property type="evidence" value="ECO:0000315"/>
    <property type="project" value="BHF-UCL"/>
</dbReference>
<dbReference type="GO" id="GO:0010880">
    <property type="term" value="P:regulation of release of sequestered calcium ion into cytosol by sarcoplasmic reticulum"/>
    <property type="evidence" value="ECO:0000315"/>
    <property type="project" value="BHF-UCL"/>
</dbReference>
<dbReference type="GO" id="GO:0006939">
    <property type="term" value="P:smooth muscle contraction"/>
    <property type="evidence" value="ECO:0000315"/>
    <property type="project" value="MGI"/>
</dbReference>
<dbReference type="FunFam" id="1.10.1300.10:FF:000001">
    <property type="entry name" value="Phosphodiesterase"/>
    <property type="match status" value="1"/>
</dbReference>
<dbReference type="Gene3D" id="1.10.1300.10">
    <property type="entry name" value="3'5'-cyclic nucleotide phosphodiesterase, catalytic domain"/>
    <property type="match status" value="1"/>
</dbReference>
<dbReference type="InterPro" id="IPR040844">
    <property type="entry name" value="PDE4_UCR"/>
</dbReference>
<dbReference type="InterPro" id="IPR023088">
    <property type="entry name" value="PDEase"/>
</dbReference>
<dbReference type="InterPro" id="IPR002073">
    <property type="entry name" value="PDEase_catalytic_dom"/>
</dbReference>
<dbReference type="InterPro" id="IPR036971">
    <property type="entry name" value="PDEase_catalytic_dom_sf"/>
</dbReference>
<dbReference type="InterPro" id="IPR023174">
    <property type="entry name" value="PDEase_CS"/>
</dbReference>
<dbReference type="PANTHER" id="PTHR11347">
    <property type="entry name" value="CYCLIC NUCLEOTIDE PHOSPHODIESTERASE"/>
    <property type="match status" value="1"/>
</dbReference>
<dbReference type="Pfam" id="PF18100">
    <property type="entry name" value="PDE4_UCR"/>
    <property type="match status" value="1"/>
</dbReference>
<dbReference type="Pfam" id="PF00233">
    <property type="entry name" value="PDEase_I"/>
    <property type="match status" value="1"/>
</dbReference>
<dbReference type="PRINTS" id="PR00387">
    <property type="entry name" value="PDIESTERASE1"/>
</dbReference>
<dbReference type="SUPFAM" id="SSF109604">
    <property type="entry name" value="HD-domain/PDEase-like"/>
    <property type="match status" value="1"/>
</dbReference>
<dbReference type="PROSITE" id="PS00126">
    <property type="entry name" value="PDEASE_I_1"/>
    <property type="match status" value="1"/>
</dbReference>
<dbReference type="PROSITE" id="PS51845">
    <property type="entry name" value="PDEASE_I_2"/>
    <property type="match status" value="1"/>
</dbReference>
<proteinExistence type="evidence at protein level"/>
<evidence type="ECO:0000250" key="1"/>
<evidence type="ECO:0000250" key="2">
    <source>
        <dbReference type="UniProtKB" id="Q07343"/>
    </source>
</evidence>
<evidence type="ECO:0000250" key="3">
    <source>
        <dbReference type="UniProtKB" id="Q08499"/>
    </source>
</evidence>
<evidence type="ECO:0000255" key="4">
    <source>
        <dbReference type="PROSITE-ProRule" id="PRU01192"/>
    </source>
</evidence>
<evidence type="ECO:0000256" key="5">
    <source>
        <dbReference type="SAM" id="MobiDB-lite"/>
    </source>
</evidence>
<evidence type="ECO:0000269" key="6">
    <source>
    </source>
</evidence>
<evidence type="ECO:0000269" key="7">
    <source>
    </source>
</evidence>
<evidence type="ECO:0000269" key="8">
    <source>
    </source>
</evidence>
<evidence type="ECO:0000303" key="9">
    <source>
    </source>
</evidence>
<evidence type="ECO:0000303" key="10">
    <source ref="2"/>
</evidence>
<evidence type="ECO:0000305" key="11"/>
<reference key="1">
    <citation type="journal article" date="2003" name="Cell. Signal.">
        <title>Cloning and characterization of novel PDE4D isoforms PDE4D6 and PDE4D7.</title>
        <authorList>
            <person name="Wang D."/>
            <person name="Deng C."/>
            <person name="Bugaj-Gaweda B."/>
            <person name="Kwan M."/>
            <person name="Gunwaldsen C."/>
            <person name="Leonard C."/>
            <person name="Xin X."/>
            <person name="Hu Y."/>
            <person name="Unterbeck A."/>
            <person name="De Vivo M."/>
        </authorList>
    </citation>
    <scope>NUCLEOTIDE SEQUENCE [MRNA] (ISOFORM 7)</scope>
    <scope>TISSUE SPECIFICITY</scope>
    <source>
        <strain>BALB/cJ</strain>
    </source>
</reference>
<reference key="2">
    <citation type="submission" date="2003-09" db="EMBL/GenBank/DDBJ databases">
        <authorList>
            <person name="Chai H."/>
            <person name="Gaweda B."/>
            <person name="De Vivo M."/>
            <person name="Wang D."/>
        </authorList>
    </citation>
    <scope>NUCLEOTIDE SEQUENCE [MRNA] (ISOFORM 9)</scope>
</reference>
<reference key="3">
    <citation type="journal article" date="2005" name="Science">
        <title>The transcriptional landscape of the mammalian genome.</title>
        <authorList>
            <person name="Carninci P."/>
            <person name="Kasukawa T."/>
            <person name="Katayama S."/>
            <person name="Gough J."/>
            <person name="Frith M.C."/>
            <person name="Maeda N."/>
            <person name="Oyama R."/>
            <person name="Ravasi T."/>
            <person name="Lenhard B."/>
            <person name="Wells C."/>
            <person name="Kodzius R."/>
            <person name="Shimokawa K."/>
            <person name="Bajic V.B."/>
            <person name="Brenner S.E."/>
            <person name="Batalov S."/>
            <person name="Forrest A.R."/>
            <person name="Zavolan M."/>
            <person name="Davis M.J."/>
            <person name="Wilming L.G."/>
            <person name="Aidinis V."/>
            <person name="Allen J.E."/>
            <person name="Ambesi-Impiombato A."/>
            <person name="Apweiler R."/>
            <person name="Aturaliya R.N."/>
            <person name="Bailey T.L."/>
            <person name="Bansal M."/>
            <person name="Baxter L."/>
            <person name="Beisel K.W."/>
            <person name="Bersano T."/>
            <person name="Bono H."/>
            <person name="Chalk A.M."/>
            <person name="Chiu K.P."/>
            <person name="Choudhary V."/>
            <person name="Christoffels A."/>
            <person name="Clutterbuck D.R."/>
            <person name="Crowe M.L."/>
            <person name="Dalla E."/>
            <person name="Dalrymple B.P."/>
            <person name="de Bono B."/>
            <person name="Della Gatta G."/>
            <person name="di Bernardo D."/>
            <person name="Down T."/>
            <person name="Engstrom P."/>
            <person name="Fagiolini M."/>
            <person name="Faulkner G."/>
            <person name="Fletcher C.F."/>
            <person name="Fukushima T."/>
            <person name="Furuno M."/>
            <person name="Futaki S."/>
            <person name="Gariboldi M."/>
            <person name="Georgii-Hemming P."/>
            <person name="Gingeras T.R."/>
            <person name="Gojobori T."/>
            <person name="Green R.E."/>
            <person name="Gustincich S."/>
            <person name="Harbers M."/>
            <person name="Hayashi Y."/>
            <person name="Hensch T.K."/>
            <person name="Hirokawa N."/>
            <person name="Hill D."/>
            <person name="Huminiecki L."/>
            <person name="Iacono M."/>
            <person name="Ikeo K."/>
            <person name="Iwama A."/>
            <person name="Ishikawa T."/>
            <person name="Jakt M."/>
            <person name="Kanapin A."/>
            <person name="Katoh M."/>
            <person name="Kawasawa Y."/>
            <person name="Kelso J."/>
            <person name="Kitamura H."/>
            <person name="Kitano H."/>
            <person name="Kollias G."/>
            <person name="Krishnan S.P."/>
            <person name="Kruger A."/>
            <person name="Kummerfeld S.K."/>
            <person name="Kurochkin I.V."/>
            <person name="Lareau L.F."/>
            <person name="Lazarevic D."/>
            <person name="Lipovich L."/>
            <person name="Liu J."/>
            <person name="Liuni S."/>
            <person name="McWilliam S."/>
            <person name="Madan Babu M."/>
            <person name="Madera M."/>
            <person name="Marchionni L."/>
            <person name="Matsuda H."/>
            <person name="Matsuzawa S."/>
            <person name="Miki H."/>
            <person name="Mignone F."/>
            <person name="Miyake S."/>
            <person name="Morris K."/>
            <person name="Mottagui-Tabar S."/>
            <person name="Mulder N."/>
            <person name="Nakano N."/>
            <person name="Nakauchi H."/>
            <person name="Ng P."/>
            <person name="Nilsson R."/>
            <person name="Nishiguchi S."/>
            <person name="Nishikawa S."/>
            <person name="Nori F."/>
            <person name="Ohara O."/>
            <person name="Okazaki Y."/>
            <person name="Orlando V."/>
            <person name="Pang K.C."/>
            <person name="Pavan W.J."/>
            <person name="Pavesi G."/>
            <person name="Pesole G."/>
            <person name="Petrovsky N."/>
            <person name="Piazza S."/>
            <person name="Reed J."/>
            <person name="Reid J.F."/>
            <person name="Ring B.Z."/>
            <person name="Ringwald M."/>
            <person name="Rost B."/>
            <person name="Ruan Y."/>
            <person name="Salzberg S.L."/>
            <person name="Sandelin A."/>
            <person name="Schneider C."/>
            <person name="Schoenbach C."/>
            <person name="Sekiguchi K."/>
            <person name="Semple C.A."/>
            <person name="Seno S."/>
            <person name="Sessa L."/>
            <person name="Sheng Y."/>
            <person name="Shibata Y."/>
            <person name="Shimada H."/>
            <person name="Shimada K."/>
            <person name="Silva D."/>
            <person name="Sinclair B."/>
            <person name="Sperling S."/>
            <person name="Stupka E."/>
            <person name="Sugiura K."/>
            <person name="Sultana R."/>
            <person name="Takenaka Y."/>
            <person name="Taki K."/>
            <person name="Tammoja K."/>
            <person name="Tan S.L."/>
            <person name="Tang S."/>
            <person name="Taylor M.S."/>
            <person name="Tegner J."/>
            <person name="Teichmann S.A."/>
            <person name="Ueda H.R."/>
            <person name="van Nimwegen E."/>
            <person name="Verardo R."/>
            <person name="Wei C.L."/>
            <person name="Yagi K."/>
            <person name="Yamanishi H."/>
            <person name="Zabarovsky E."/>
            <person name="Zhu S."/>
            <person name="Zimmer A."/>
            <person name="Hide W."/>
            <person name="Bult C."/>
            <person name="Grimmond S.M."/>
            <person name="Teasdale R.D."/>
            <person name="Liu E.T."/>
            <person name="Brusic V."/>
            <person name="Quackenbush J."/>
            <person name="Wahlestedt C."/>
            <person name="Mattick J.S."/>
            <person name="Hume D.A."/>
            <person name="Kai C."/>
            <person name="Sasaki D."/>
            <person name="Tomaru Y."/>
            <person name="Fukuda S."/>
            <person name="Kanamori-Katayama M."/>
            <person name="Suzuki M."/>
            <person name="Aoki J."/>
            <person name="Arakawa T."/>
            <person name="Iida J."/>
            <person name="Imamura K."/>
            <person name="Itoh M."/>
            <person name="Kato T."/>
            <person name="Kawaji H."/>
            <person name="Kawagashira N."/>
            <person name="Kawashima T."/>
            <person name="Kojima M."/>
            <person name="Kondo S."/>
            <person name="Konno H."/>
            <person name="Nakano K."/>
            <person name="Ninomiya N."/>
            <person name="Nishio T."/>
            <person name="Okada M."/>
            <person name="Plessy C."/>
            <person name="Shibata K."/>
            <person name="Shiraki T."/>
            <person name="Suzuki S."/>
            <person name="Tagami M."/>
            <person name="Waki K."/>
            <person name="Watahiki A."/>
            <person name="Okamura-Oho Y."/>
            <person name="Suzuki H."/>
            <person name="Kawai J."/>
            <person name="Hayashizaki Y."/>
        </authorList>
    </citation>
    <scope>NUCLEOTIDE SEQUENCE [LARGE SCALE MRNA] (ISOFORM 3)</scope>
    <source>
        <strain>C57BL/6J</strain>
        <tissue>Head</tissue>
    </source>
</reference>
<reference key="4">
    <citation type="journal article" date="2009" name="PLoS Biol.">
        <title>Lineage-specific biology revealed by a finished genome assembly of the mouse.</title>
        <authorList>
            <person name="Church D.M."/>
            <person name="Goodstadt L."/>
            <person name="Hillier L.W."/>
            <person name="Zody M.C."/>
            <person name="Goldstein S."/>
            <person name="She X."/>
            <person name="Bult C.J."/>
            <person name="Agarwala R."/>
            <person name="Cherry J.L."/>
            <person name="DiCuccio M."/>
            <person name="Hlavina W."/>
            <person name="Kapustin Y."/>
            <person name="Meric P."/>
            <person name="Maglott D."/>
            <person name="Birtle Z."/>
            <person name="Marques A.C."/>
            <person name="Graves T."/>
            <person name="Zhou S."/>
            <person name="Teague B."/>
            <person name="Potamousis K."/>
            <person name="Churas C."/>
            <person name="Place M."/>
            <person name="Herschleb J."/>
            <person name="Runnheim R."/>
            <person name="Forrest D."/>
            <person name="Amos-Landgraf J."/>
            <person name="Schwartz D.C."/>
            <person name="Cheng Z."/>
            <person name="Lindblad-Toh K."/>
            <person name="Eichler E.E."/>
            <person name="Ponting C.P."/>
        </authorList>
    </citation>
    <scope>NUCLEOTIDE SEQUENCE [LARGE SCALE GENOMIC DNA]</scope>
    <source>
        <strain>C57BL/6J</strain>
    </source>
</reference>
<reference key="5">
    <citation type="journal article" date="1992" name="J. Biol. Chem.">
        <title>A polymerase chain reaction strategy to identify and clone cyclic nucleotide phosphodiesterase cDNAs. Molecular cloning of the cDNA encoding the 63-kDa calmodulin-dependent phosphodiesterase.</title>
        <authorList>
            <person name="Repaske D.R."/>
            <person name="Swinnen J.V."/>
            <person name="Jin S.-L.C."/>
            <person name="van Wyk J.J."/>
            <person name="Conti M."/>
        </authorList>
    </citation>
    <scope>NUCLEOTIDE SEQUENCE [MRNA] OF 400-514</scope>
</reference>
<reference key="6">
    <citation type="journal article" date="2007" name="J. Biol. Chem.">
        <title>Dynamic regulation of cystic fibrosis transmembrane conductance regulator by competitive interactions of molecular adaptors.</title>
        <authorList>
            <person name="Lee J.H."/>
            <person name="Richter W."/>
            <person name="Namkung W."/>
            <person name="Kim K.H."/>
            <person name="Kim E."/>
            <person name="Conti M."/>
            <person name="Lee M.G."/>
        </authorList>
    </citation>
    <scope>INTERACTION WITH SHANK2</scope>
    <scope>TISSUE SPECIFICITY</scope>
</reference>
<reference key="7">
    <citation type="journal article" date="2008" name="Proc. Natl. Acad. Sci. U.S.A.">
        <title>Remodeling of ryanodine receptor complex causes 'leaky' channels: a molecular mechanism for decreased exercise capacity.</title>
        <authorList>
            <person name="Bellinger A.M."/>
            <person name="Reiken S."/>
            <person name="Dura M."/>
            <person name="Murphy P.W."/>
            <person name="Deng S.X."/>
            <person name="Landry D.W."/>
            <person name="Nieman D."/>
            <person name="Lehnart S.E."/>
            <person name="Samaru M."/>
            <person name="LaCampagne A."/>
            <person name="Marks A.R."/>
        </authorList>
    </citation>
    <scope>IDENTIFICATION IN A COMPLEX WITH RYR1; FKBP1A; PKA AND PP1</scope>
</reference>
<reference key="8">
    <citation type="journal article" date="2010" name="Cell">
        <title>A tissue-specific atlas of mouse protein phosphorylation and expression.</title>
        <authorList>
            <person name="Huttlin E.L."/>
            <person name="Jedrychowski M.P."/>
            <person name="Elias J.E."/>
            <person name="Goswami T."/>
            <person name="Rad R."/>
            <person name="Beausoleil S.A."/>
            <person name="Villen J."/>
            <person name="Haas W."/>
            <person name="Sowa M.E."/>
            <person name="Gygi S.P."/>
        </authorList>
    </citation>
    <scope>IDENTIFICATION BY MASS SPECTROMETRY [LARGE SCALE ANALYSIS]</scope>
    <source>
        <tissue>Brain</tissue>
        <tissue>Brown adipose tissue</tissue>
        <tissue>Heart</tissue>
        <tissue>Kidney</tissue>
        <tissue>Lung</tissue>
        <tissue>Pancreas</tissue>
        <tissue>Spleen</tissue>
    </source>
</reference>
<protein>
    <recommendedName>
        <fullName evidence="11">3',5'-cyclic-AMP phosphodiesterase 4D</fullName>
        <ecNumber>3.1.4.53</ecNumber>
    </recommendedName>
    <alternativeName>
        <fullName>DPDE3</fullName>
    </alternativeName>
    <alternativeName>
        <fullName evidence="11">cAMP-specific phosphodiesterase 4D</fullName>
    </alternativeName>
</protein>
<organism>
    <name type="scientific">Mus musculus</name>
    <name type="common">Mouse</name>
    <dbReference type="NCBI Taxonomy" id="10090"/>
    <lineage>
        <taxon>Eukaryota</taxon>
        <taxon>Metazoa</taxon>
        <taxon>Chordata</taxon>
        <taxon>Craniata</taxon>
        <taxon>Vertebrata</taxon>
        <taxon>Euteleostomi</taxon>
        <taxon>Mammalia</taxon>
        <taxon>Eutheria</taxon>
        <taxon>Euarchontoglires</taxon>
        <taxon>Glires</taxon>
        <taxon>Rodentia</taxon>
        <taxon>Myomorpha</taxon>
        <taxon>Muroidea</taxon>
        <taxon>Muridae</taxon>
        <taxon>Murinae</taxon>
        <taxon>Mus</taxon>
        <taxon>Mus</taxon>
    </lineage>
</organism>
<keyword id="KW-0025">Alternative splicing</keyword>
<keyword id="KW-0114">cAMP</keyword>
<keyword id="KW-1003">Cell membrane</keyword>
<keyword id="KW-0963">Cytoplasm</keyword>
<keyword id="KW-0206">Cytoskeleton</keyword>
<keyword id="KW-0378">Hydrolase</keyword>
<keyword id="KW-1017">Isopeptide bond</keyword>
<keyword id="KW-0460">Magnesium</keyword>
<keyword id="KW-0464">Manganese</keyword>
<keyword id="KW-0472">Membrane</keyword>
<keyword id="KW-0479">Metal-binding</keyword>
<keyword id="KW-0597">Phosphoprotein</keyword>
<keyword id="KW-1185">Reference proteome</keyword>
<keyword id="KW-0832">Ubl conjugation</keyword>
<keyword id="KW-0862">Zinc</keyword>